<gene>
    <name evidence="1" type="primary">arcA</name>
    <name type="ordered locus">BDU_854</name>
</gene>
<protein>
    <recommendedName>
        <fullName evidence="1">Arginine deiminase</fullName>
        <shortName evidence="1">ADI</shortName>
        <ecNumber evidence="1">3.5.3.6</ecNumber>
    </recommendedName>
    <alternativeName>
        <fullName evidence="1">Arginine dihydrolase</fullName>
        <shortName evidence="1">AD</shortName>
    </alternativeName>
</protein>
<reference key="1">
    <citation type="journal article" date="2008" name="PLoS Genet.">
        <title>The genome of Borrelia recurrentis, the agent of deadly louse-borne relapsing fever, is a degraded subset of tick-borne Borrelia duttonii.</title>
        <authorList>
            <person name="Lescot M."/>
            <person name="Audic S."/>
            <person name="Robert C."/>
            <person name="Nguyen T.T."/>
            <person name="Blanc G."/>
            <person name="Cutler S.J."/>
            <person name="Wincker P."/>
            <person name="Couloux A."/>
            <person name="Claverie J.-M."/>
            <person name="Raoult D."/>
            <person name="Drancourt M."/>
        </authorList>
    </citation>
    <scope>NUCLEOTIDE SEQUENCE [LARGE SCALE GENOMIC DNA]</scope>
    <source>
        <strain>Ly</strain>
    </source>
</reference>
<proteinExistence type="inferred from homology"/>
<sequence length="409" mass="46596">MQYLKPINVFSEIGRLKKVLLHRPGKELENLTPSIMKRLLFDDIPYLHVAIQEHDSFADTLRGNGVEVVYIEDLISETLSNDDSIKEQFISQFILEAGIRTENKTRALKDYFCNMSVNDMISNMIAGVTRDDLKNYKSDSLNSLVNSEYPLIIDPMPNILFTRDPFASIGHGLTINRMSTKTRHRETIFAEYIFKYHPIYKDNVPIWYNRDEDTTLEGGDELVLSRDVLAIGVSERTESESVEKVARKLFEQKISFNTILAFQIPQSRAYMHLDTVFTQIDHTTFTSFISDDMKFTIYALTYDVSSGSIKVKSEKAKLEDILGFYLGCKVNIIKCAGGDLIHGAREQWNDGANTLAIAPGEVIVYSRNHMTNKLLEEFGIKVYQIPSSELSRGRGGPRCMSMPLIREDI</sequence>
<evidence type="ECO:0000255" key="1">
    <source>
        <dbReference type="HAMAP-Rule" id="MF_00242"/>
    </source>
</evidence>
<dbReference type="EC" id="3.5.3.6" evidence="1"/>
<dbReference type="EMBL" id="CP000976">
    <property type="protein sequence ID" value="ACH93776.1"/>
    <property type="molecule type" value="Genomic_DNA"/>
</dbReference>
<dbReference type="RefSeq" id="WP_012538581.1">
    <property type="nucleotide sequence ID" value="NC_011229.1"/>
</dbReference>
<dbReference type="SMR" id="B5RN40"/>
<dbReference type="STRING" id="412419.BDU_854"/>
<dbReference type="KEGG" id="bdu:BDU_854"/>
<dbReference type="eggNOG" id="COG2235">
    <property type="taxonomic scope" value="Bacteria"/>
</dbReference>
<dbReference type="HOGENOM" id="CLU_052662_0_1_12"/>
<dbReference type="OrthoDB" id="9807502at2"/>
<dbReference type="UniPathway" id="UPA00254">
    <property type="reaction ID" value="UER00364"/>
</dbReference>
<dbReference type="Proteomes" id="UP000000611">
    <property type="component" value="Chromosome"/>
</dbReference>
<dbReference type="GO" id="GO:0005737">
    <property type="term" value="C:cytoplasm"/>
    <property type="evidence" value="ECO:0007669"/>
    <property type="project" value="UniProtKB-SubCell"/>
</dbReference>
<dbReference type="GO" id="GO:0016990">
    <property type="term" value="F:arginine deiminase activity"/>
    <property type="evidence" value="ECO:0007669"/>
    <property type="project" value="UniProtKB-UniRule"/>
</dbReference>
<dbReference type="GO" id="GO:0019547">
    <property type="term" value="P:arginine catabolic process to ornithine"/>
    <property type="evidence" value="ECO:0007669"/>
    <property type="project" value="UniProtKB-UniRule"/>
</dbReference>
<dbReference type="GO" id="GO:0019546">
    <property type="term" value="P:arginine deiminase pathway"/>
    <property type="evidence" value="ECO:0007669"/>
    <property type="project" value="TreeGrafter"/>
</dbReference>
<dbReference type="Gene3D" id="1.10.3930.10">
    <property type="entry name" value="Arginine deiminase"/>
    <property type="match status" value="1"/>
</dbReference>
<dbReference type="Gene3D" id="3.75.10.10">
    <property type="entry name" value="L-arginine/glycine Amidinotransferase, Chain A"/>
    <property type="match status" value="1"/>
</dbReference>
<dbReference type="HAMAP" id="MF_00242">
    <property type="entry name" value="Arg_deiminase"/>
    <property type="match status" value="1"/>
</dbReference>
<dbReference type="InterPro" id="IPR003876">
    <property type="entry name" value="Arg_deiminase"/>
</dbReference>
<dbReference type="NCBIfam" id="TIGR01078">
    <property type="entry name" value="arcA"/>
    <property type="match status" value="1"/>
</dbReference>
<dbReference type="NCBIfam" id="NF002381">
    <property type="entry name" value="PRK01388.1"/>
    <property type="match status" value="1"/>
</dbReference>
<dbReference type="PANTHER" id="PTHR47271">
    <property type="entry name" value="ARGININE DEIMINASE"/>
    <property type="match status" value="1"/>
</dbReference>
<dbReference type="PANTHER" id="PTHR47271:SF2">
    <property type="entry name" value="ARGININE DEIMINASE"/>
    <property type="match status" value="1"/>
</dbReference>
<dbReference type="Pfam" id="PF02274">
    <property type="entry name" value="ADI"/>
    <property type="match status" value="1"/>
</dbReference>
<dbReference type="PIRSF" id="PIRSF006356">
    <property type="entry name" value="Arg_deiminase"/>
    <property type="match status" value="1"/>
</dbReference>
<dbReference type="PRINTS" id="PR01466">
    <property type="entry name" value="ARGDEIMINASE"/>
</dbReference>
<dbReference type="SUPFAM" id="SSF55909">
    <property type="entry name" value="Pentein"/>
    <property type="match status" value="1"/>
</dbReference>
<feature type="chain" id="PRO_1000100735" description="Arginine deiminase">
    <location>
        <begin position="1"/>
        <end position="409"/>
    </location>
</feature>
<feature type="active site" description="Amidino-cysteine intermediate" evidence="1">
    <location>
        <position position="399"/>
    </location>
</feature>
<accession>B5RN40</accession>
<keyword id="KW-0056">Arginine metabolism</keyword>
<keyword id="KW-0963">Cytoplasm</keyword>
<keyword id="KW-0378">Hydrolase</keyword>
<name>ARCA_BORDL</name>
<comment type="catalytic activity">
    <reaction evidence="1">
        <text>L-arginine + H2O = L-citrulline + NH4(+)</text>
        <dbReference type="Rhea" id="RHEA:19597"/>
        <dbReference type="ChEBI" id="CHEBI:15377"/>
        <dbReference type="ChEBI" id="CHEBI:28938"/>
        <dbReference type="ChEBI" id="CHEBI:32682"/>
        <dbReference type="ChEBI" id="CHEBI:57743"/>
        <dbReference type="EC" id="3.5.3.6"/>
    </reaction>
</comment>
<comment type="pathway">
    <text evidence="1">Amino-acid degradation; L-arginine degradation via ADI pathway; carbamoyl phosphate from L-arginine: step 1/2.</text>
</comment>
<comment type="subcellular location">
    <subcellularLocation>
        <location evidence="1">Cytoplasm</location>
    </subcellularLocation>
</comment>
<comment type="similarity">
    <text evidence="1">Belongs to the arginine deiminase family.</text>
</comment>
<organism>
    <name type="scientific">Borrelia duttonii (strain Ly)</name>
    <dbReference type="NCBI Taxonomy" id="412419"/>
    <lineage>
        <taxon>Bacteria</taxon>
        <taxon>Pseudomonadati</taxon>
        <taxon>Spirochaetota</taxon>
        <taxon>Spirochaetia</taxon>
        <taxon>Spirochaetales</taxon>
        <taxon>Borreliaceae</taxon>
        <taxon>Borrelia</taxon>
    </lineage>
</organism>